<proteinExistence type="inferred from homology"/>
<comment type="function">
    <text evidence="1">Facilitates the functional incorporation of the urease nickel metallocenter. This process requires GTP hydrolysis, probably effectuated by UreG.</text>
</comment>
<comment type="subunit">
    <text evidence="1">Homodimer. UreD, UreF and UreG form a complex that acts as a GTP-hydrolysis-dependent molecular chaperone, activating the urease apoprotein by helping to assemble the nickel containing metallocenter of UreC. The UreE protein probably delivers the nickel.</text>
</comment>
<comment type="subcellular location">
    <subcellularLocation>
        <location evidence="1">Cytoplasm</location>
    </subcellularLocation>
</comment>
<comment type="similarity">
    <text evidence="1">Belongs to the SIMIBI class G3E GTPase family. UreG subfamily.</text>
</comment>
<evidence type="ECO:0000255" key="1">
    <source>
        <dbReference type="HAMAP-Rule" id="MF_01389"/>
    </source>
</evidence>
<feature type="chain" id="PRO_0000347342" description="Urease accessory protein UreG">
    <location>
        <begin position="1"/>
        <end position="204"/>
    </location>
</feature>
<feature type="binding site" evidence="1">
    <location>
        <begin position="13"/>
        <end position="20"/>
    </location>
    <ligand>
        <name>GTP</name>
        <dbReference type="ChEBI" id="CHEBI:37565"/>
    </ligand>
</feature>
<accession>B0V9P2</accession>
<organism>
    <name type="scientific">Acinetobacter baumannii (strain AYE)</name>
    <dbReference type="NCBI Taxonomy" id="509173"/>
    <lineage>
        <taxon>Bacteria</taxon>
        <taxon>Pseudomonadati</taxon>
        <taxon>Pseudomonadota</taxon>
        <taxon>Gammaproteobacteria</taxon>
        <taxon>Moraxellales</taxon>
        <taxon>Moraxellaceae</taxon>
        <taxon>Acinetobacter</taxon>
        <taxon>Acinetobacter calcoaceticus/baumannii complex</taxon>
    </lineage>
</organism>
<gene>
    <name evidence="1" type="primary">ureG</name>
    <name type="ordered locus">ABAYE2773</name>
</gene>
<keyword id="KW-0143">Chaperone</keyword>
<keyword id="KW-0963">Cytoplasm</keyword>
<keyword id="KW-0342">GTP-binding</keyword>
<keyword id="KW-0996">Nickel insertion</keyword>
<keyword id="KW-0547">Nucleotide-binding</keyword>
<protein>
    <recommendedName>
        <fullName evidence="1">Urease accessory protein UreG</fullName>
    </recommendedName>
</protein>
<reference key="1">
    <citation type="journal article" date="2008" name="PLoS ONE">
        <title>Comparative analysis of Acinetobacters: three genomes for three lifestyles.</title>
        <authorList>
            <person name="Vallenet D."/>
            <person name="Nordmann P."/>
            <person name="Barbe V."/>
            <person name="Poirel L."/>
            <person name="Mangenot S."/>
            <person name="Bataille E."/>
            <person name="Dossat C."/>
            <person name="Gas S."/>
            <person name="Kreimeyer A."/>
            <person name="Lenoble P."/>
            <person name="Oztas S."/>
            <person name="Poulain J."/>
            <person name="Segurens B."/>
            <person name="Robert C."/>
            <person name="Abergel C."/>
            <person name="Claverie J.-M."/>
            <person name="Raoult D."/>
            <person name="Medigue C."/>
            <person name="Weissenbach J."/>
            <person name="Cruveiller S."/>
        </authorList>
    </citation>
    <scope>NUCLEOTIDE SEQUENCE [LARGE SCALE GENOMIC DNA]</scope>
    <source>
        <strain>AYE</strain>
    </source>
</reference>
<sequence length="204" mass="22106">MTERSPLRVGIGGPVGSGKTALTLNLCRALRDKYNMAVVTNDIYTKEDSNFLTRNEAMSPDRIVGVETGGCPHTAIREDASINLAAIDDLCEKFDGLELIIIESGGDNLAATFSPELSDLTLYVIDVAGGEKIPRKGGPGITKSDLLIINKTDLAPMVGANLDVMDQDAKRMRGEKPFLFSNMKTQDGLEEIIQFIEKQGLFKA</sequence>
<name>UREG_ACIBY</name>
<dbReference type="EMBL" id="CU459141">
    <property type="protein sequence ID" value="CAM87604.1"/>
    <property type="molecule type" value="Genomic_DNA"/>
</dbReference>
<dbReference type="RefSeq" id="WP_000140200.1">
    <property type="nucleotide sequence ID" value="NZ_JBDGFB010000015.1"/>
</dbReference>
<dbReference type="SMR" id="B0V9P2"/>
<dbReference type="EnsemblBacteria" id="CAM87604">
    <property type="protein sequence ID" value="CAM87604"/>
    <property type="gene ID" value="ABAYE2773"/>
</dbReference>
<dbReference type="GeneID" id="92892980"/>
<dbReference type="KEGG" id="aby:ABAYE2773"/>
<dbReference type="HOGENOM" id="CLU_072144_1_0_6"/>
<dbReference type="GO" id="GO:0005737">
    <property type="term" value="C:cytoplasm"/>
    <property type="evidence" value="ECO:0007669"/>
    <property type="project" value="UniProtKB-SubCell"/>
</dbReference>
<dbReference type="GO" id="GO:0005525">
    <property type="term" value="F:GTP binding"/>
    <property type="evidence" value="ECO:0007669"/>
    <property type="project" value="UniProtKB-KW"/>
</dbReference>
<dbReference type="GO" id="GO:0003924">
    <property type="term" value="F:GTPase activity"/>
    <property type="evidence" value="ECO:0007669"/>
    <property type="project" value="InterPro"/>
</dbReference>
<dbReference type="GO" id="GO:0016151">
    <property type="term" value="F:nickel cation binding"/>
    <property type="evidence" value="ECO:0007669"/>
    <property type="project" value="UniProtKB-UniRule"/>
</dbReference>
<dbReference type="GO" id="GO:0043419">
    <property type="term" value="P:urea catabolic process"/>
    <property type="evidence" value="ECO:0007669"/>
    <property type="project" value="InterPro"/>
</dbReference>
<dbReference type="CDD" id="cd05540">
    <property type="entry name" value="UreG"/>
    <property type="match status" value="1"/>
</dbReference>
<dbReference type="FunFam" id="3.40.50.300:FF:000208">
    <property type="entry name" value="Urease accessory protein UreG"/>
    <property type="match status" value="1"/>
</dbReference>
<dbReference type="Gene3D" id="3.40.50.300">
    <property type="entry name" value="P-loop containing nucleotide triphosphate hydrolases"/>
    <property type="match status" value="1"/>
</dbReference>
<dbReference type="HAMAP" id="MF_01389">
    <property type="entry name" value="UreG"/>
    <property type="match status" value="1"/>
</dbReference>
<dbReference type="InterPro" id="IPR003495">
    <property type="entry name" value="CobW/HypB/UreG_nucleotide-bd"/>
</dbReference>
<dbReference type="InterPro" id="IPR027417">
    <property type="entry name" value="P-loop_NTPase"/>
</dbReference>
<dbReference type="InterPro" id="IPR004400">
    <property type="entry name" value="UreG"/>
</dbReference>
<dbReference type="NCBIfam" id="TIGR00101">
    <property type="entry name" value="ureG"/>
    <property type="match status" value="1"/>
</dbReference>
<dbReference type="PANTHER" id="PTHR31715">
    <property type="entry name" value="UREASE ACCESSORY PROTEIN G"/>
    <property type="match status" value="1"/>
</dbReference>
<dbReference type="PANTHER" id="PTHR31715:SF0">
    <property type="entry name" value="UREASE ACCESSORY PROTEIN G"/>
    <property type="match status" value="1"/>
</dbReference>
<dbReference type="Pfam" id="PF02492">
    <property type="entry name" value="cobW"/>
    <property type="match status" value="1"/>
</dbReference>
<dbReference type="PIRSF" id="PIRSF005624">
    <property type="entry name" value="Ni-bind_GTPase"/>
    <property type="match status" value="1"/>
</dbReference>
<dbReference type="SUPFAM" id="SSF52540">
    <property type="entry name" value="P-loop containing nucleoside triphosphate hydrolases"/>
    <property type="match status" value="1"/>
</dbReference>